<accession>A7YWM1</accession>
<keyword id="KW-0012">Acyltransferase</keyword>
<keyword id="KW-0317">Glutathione biosynthesis</keyword>
<keyword id="KW-0325">Glycoprotein</keyword>
<keyword id="KW-0378">Hydrolase</keyword>
<keyword id="KW-0472">Membrane</keyword>
<keyword id="KW-1185">Reference proteome</keyword>
<keyword id="KW-0735">Signal-anchor</keyword>
<keyword id="KW-0808">Transferase</keyword>
<keyword id="KW-0812">Transmembrane</keyword>
<keyword id="KW-1133">Transmembrane helix</keyword>
<keyword id="KW-0865">Zymogen</keyword>
<protein>
    <recommendedName>
        <fullName evidence="5">Glutathione hydrolase 6</fullName>
        <ecNumber evidence="2">3.4.19.13</ecNumber>
    </recommendedName>
    <alternativeName>
        <fullName>Gamma-glutamyltransferase 6</fullName>
        <shortName>GGT 6</shortName>
        <ecNumber evidence="2">2.3.2.2</ecNumber>
    </alternativeName>
    <alternativeName>
        <fullName>Gamma-glutamyltranspeptidase 6</fullName>
    </alternativeName>
    <component>
        <recommendedName>
            <fullName>Glutathione hydrolase 6 heavy chain</fullName>
        </recommendedName>
    </component>
    <component>
        <recommendedName>
            <fullName>Glutathione hydrolase 6 light chain</fullName>
        </recommendedName>
    </component>
</protein>
<gene>
    <name evidence="3" type="primary">GGT6</name>
</gene>
<proteinExistence type="evidence at transcript level"/>
<reference key="1">
    <citation type="submission" date="2007-03" db="EMBL/GenBank/DDBJ databases">
        <authorList>
            <consortium name="NIH - Mammalian Gene Collection (MGC) project"/>
        </authorList>
    </citation>
    <scope>NUCLEOTIDE SEQUENCE [LARGE SCALE MRNA]</scope>
    <source>
        <strain>Hereford</strain>
        <tissue>Fetal skin</tissue>
    </source>
</reference>
<feature type="chain" id="PRO_0000314952" description="Glutathione hydrolase 6 heavy chain">
    <location>
        <begin position="1"/>
        <end status="unknown"/>
    </location>
</feature>
<feature type="chain" id="PRO_0000314953" description="Glutathione hydrolase 6 light chain">
    <location>
        <begin status="unknown"/>
        <end position="490"/>
    </location>
</feature>
<feature type="topological domain" description="Cytoplasmic" evidence="1">
    <location>
        <begin position="1"/>
        <end position="52"/>
    </location>
</feature>
<feature type="transmembrane region" description="Helical; Signal-anchor for type II membrane protein" evidence="4">
    <location>
        <begin position="53"/>
        <end position="73"/>
    </location>
</feature>
<feature type="topological domain" description="Extracellular" evidence="1">
    <location>
        <begin position="74"/>
        <end position="490"/>
    </location>
</feature>
<feature type="glycosylation site" description="N-linked (GlcNAc...) asparagine" evidence="4">
    <location>
        <position position="160"/>
    </location>
</feature>
<feature type="glycosylation site" description="N-linked (GlcNAc...) asparagine" evidence="4">
    <location>
        <position position="165"/>
    </location>
</feature>
<feature type="glycosylation site" description="N-linked (GlcNAc...) asparagine" evidence="4">
    <location>
        <position position="374"/>
    </location>
</feature>
<dbReference type="EC" id="3.4.19.13" evidence="2"/>
<dbReference type="EC" id="2.3.2.2" evidence="2"/>
<dbReference type="EMBL" id="BC134652">
    <property type="protein sequence ID" value="AAI34653.1"/>
    <property type="molecule type" value="mRNA"/>
</dbReference>
<dbReference type="RefSeq" id="NP_001098904.1">
    <property type="nucleotide sequence ID" value="NM_001105434.1"/>
</dbReference>
<dbReference type="SMR" id="A7YWM1"/>
<dbReference type="FunCoup" id="A7YWM1">
    <property type="interactions" value="77"/>
</dbReference>
<dbReference type="STRING" id="9913.ENSBTAP00000072933"/>
<dbReference type="MEROPS" id="T03.024"/>
<dbReference type="GlyCosmos" id="A7YWM1">
    <property type="glycosylation" value="3 sites, No reported glycans"/>
</dbReference>
<dbReference type="GlyGen" id="A7YWM1">
    <property type="glycosylation" value="3 sites"/>
</dbReference>
<dbReference type="PaxDb" id="9913-ENSBTAP00000034988"/>
<dbReference type="GeneID" id="613919"/>
<dbReference type="KEGG" id="bta:613919"/>
<dbReference type="CTD" id="124975"/>
<dbReference type="eggNOG" id="KOG2410">
    <property type="taxonomic scope" value="Eukaryota"/>
</dbReference>
<dbReference type="HOGENOM" id="CLU_049993_0_0_1"/>
<dbReference type="InParanoid" id="A7YWM1"/>
<dbReference type="OrthoDB" id="1081007at2759"/>
<dbReference type="TreeFam" id="TF338758"/>
<dbReference type="UniPathway" id="UPA00204"/>
<dbReference type="Proteomes" id="UP000009136">
    <property type="component" value="Unplaced"/>
</dbReference>
<dbReference type="GO" id="GO:0016020">
    <property type="term" value="C:membrane"/>
    <property type="evidence" value="ECO:0007669"/>
    <property type="project" value="UniProtKB-SubCell"/>
</dbReference>
<dbReference type="GO" id="GO:0036374">
    <property type="term" value="F:glutathione hydrolase activity"/>
    <property type="evidence" value="ECO:0007669"/>
    <property type="project" value="UniProtKB-EC"/>
</dbReference>
<dbReference type="GO" id="GO:0103068">
    <property type="term" value="F:leukotriene C4 gamma-glutamyl transferase activity"/>
    <property type="evidence" value="ECO:0007669"/>
    <property type="project" value="UniProtKB-EC"/>
</dbReference>
<dbReference type="GO" id="GO:0006750">
    <property type="term" value="P:glutathione biosynthetic process"/>
    <property type="evidence" value="ECO:0007669"/>
    <property type="project" value="UniProtKB-KW"/>
</dbReference>
<dbReference type="Gene3D" id="3.60.20.40">
    <property type="match status" value="1"/>
</dbReference>
<dbReference type="InterPro" id="IPR052688">
    <property type="entry name" value="Gamma-glutamyltransfase"/>
</dbReference>
<dbReference type="InterPro" id="IPR043137">
    <property type="entry name" value="GGT_ssub"/>
</dbReference>
<dbReference type="InterPro" id="IPR029055">
    <property type="entry name" value="Ntn_hydrolases_N"/>
</dbReference>
<dbReference type="PANTHER" id="PTHR47278">
    <property type="entry name" value="GLUTATHIONE HYDROLASE 6"/>
    <property type="match status" value="1"/>
</dbReference>
<dbReference type="PANTHER" id="PTHR47278:SF1">
    <property type="entry name" value="GLUTATHIONE HYDROLASE 6"/>
    <property type="match status" value="1"/>
</dbReference>
<dbReference type="Pfam" id="PF01019">
    <property type="entry name" value="G_glu_transpept"/>
    <property type="match status" value="2"/>
</dbReference>
<dbReference type="PRINTS" id="PR01210">
    <property type="entry name" value="GGTRANSPTASE"/>
</dbReference>
<dbReference type="SUPFAM" id="SSF56235">
    <property type="entry name" value="N-terminal nucleophile aminohydrolases (Ntn hydrolases)"/>
    <property type="match status" value="1"/>
</dbReference>
<organism>
    <name type="scientific">Bos taurus</name>
    <name type="common">Bovine</name>
    <dbReference type="NCBI Taxonomy" id="9913"/>
    <lineage>
        <taxon>Eukaryota</taxon>
        <taxon>Metazoa</taxon>
        <taxon>Chordata</taxon>
        <taxon>Craniata</taxon>
        <taxon>Vertebrata</taxon>
        <taxon>Euteleostomi</taxon>
        <taxon>Mammalia</taxon>
        <taxon>Eutheria</taxon>
        <taxon>Laurasiatheria</taxon>
        <taxon>Artiodactyla</taxon>
        <taxon>Ruminantia</taxon>
        <taxon>Pecora</taxon>
        <taxon>Bovidae</taxon>
        <taxon>Bovinae</taxon>
        <taxon>Bos</taxon>
    </lineage>
</organism>
<sequence>MEPEAGPVLYQKLRVWEPSLESEEEEEEISEQLILDASGPHDSSGNKAGRLPGAWAQLVAALLLLAIGFSLAVRQLCSSGASPGALGSGAPPASGHSHRPGVYHHGAIISPAAECSRLGRELFVAGGNIVDAGVGAALCLAVVHPHTTGLGATYWGLFHNSSSGNSTALTSGPAQTLAPGLGLPSALPALHMLHTHFGRLPWPHLLVGPISLAQKGFLVDTSLASALAAQDTKGLCPLLCHANGTPLGPGTQVTNTKLAAVLHKASLAPTPDLSGDALLSLLAEDLGLEGPSVGPRPTLEPALQLPLPQGILFTTPSPSAGPELLELLEASLQSAGPSPAPCPALPQAAAAPRSSVLATVDSSGSVLLLTSSLNSSFGSGHLSPSTGVLLSNLVAESAAGAWACPLIFRDISDDTEVDVLGLVASGTPAAARVMTHALLSHLARPQTPDQQGPTESPRACAQGTLLQVAAHTEHAHVSSVPSGCCPFQGF</sequence>
<name>GGT6_BOVIN</name>
<comment type="function">
    <text evidence="2">Hydrolyzes and transfers gamma-glutamyl moieties from glutathione and other gamma-glutamyl compounds to acceptors.</text>
</comment>
<comment type="catalytic activity">
    <reaction evidence="2">
        <text>an N-terminal (5-L-glutamyl)-[peptide] + an alpha-amino acid = 5-L-glutamyl amino acid + an N-terminal L-alpha-aminoacyl-[peptide]</text>
        <dbReference type="Rhea" id="RHEA:23904"/>
        <dbReference type="Rhea" id="RHEA-COMP:9780"/>
        <dbReference type="Rhea" id="RHEA-COMP:9795"/>
        <dbReference type="ChEBI" id="CHEBI:77644"/>
        <dbReference type="ChEBI" id="CHEBI:78597"/>
        <dbReference type="ChEBI" id="CHEBI:78599"/>
        <dbReference type="ChEBI" id="CHEBI:78608"/>
        <dbReference type="EC" id="2.3.2.2"/>
    </reaction>
    <physiologicalReaction direction="left-to-right" evidence="2">
        <dbReference type="Rhea" id="RHEA:23905"/>
    </physiologicalReaction>
</comment>
<comment type="catalytic activity">
    <reaction evidence="2">
        <text>glutathione + H2O = L-cysteinylglycine + L-glutamate</text>
        <dbReference type="Rhea" id="RHEA:28807"/>
        <dbReference type="ChEBI" id="CHEBI:15377"/>
        <dbReference type="ChEBI" id="CHEBI:29985"/>
        <dbReference type="ChEBI" id="CHEBI:57925"/>
        <dbReference type="ChEBI" id="CHEBI:61694"/>
        <dbReference type="EC" id="3.4.19.13"/>
    </reaction>
    <physiologicalReaction direction="left-to-right" evidence="2">
        <dbReference type="Rhea" id="RHEA:28808"/>
    </physiologicalReaction>
</comment>
<comment type="catalytic activity">
    <reaction evidence="2">
        <text>an S-substituted glutathione + H2O = an S-substituted L-cysteinylglycine + L-glutamate</text>
        <dbReference type="Rhea" id="RHEA:59468"/>
        <dbReference type="ChEBI" id="CHEBI:15377"/>
        <dbReference type="ChEBI" id="CHEBI:29985"/>
        <dbReference type="ChEBI" id="CHEBI:90779"/>
        <dbReference type="ChEBI" id="CHEBI:143103"/>
        <dbReference type="EC" id="3.4.19.13"/>
    </reaction>
    <physiologicalReaction direction="left-to-right" evidence="2">
        <dbReference type="Rhea" id="RHEA:59469"/>
    </physiologicalReaction>
</comment>
<comment type="pathway">
    <text evidence="2">Sulfur metabolism; glutathione metabolism.</text>
</comment>
<comment type="subunit">
    <text evidence="2">Heterodimer composed of the light and heavy chains. The active site is located in the light chain.</text>
</comment>
<comment type="subcellular location">
    <subcellularLocation>
        <location evidence="2">Membrane</location>
        <topology evidence="1">Single-pass type II membrane protein</topology>
    </subcellularLocation>
</comment>
<comment type="PTM">
    <text evidence="2">Cleaved by autocatalysis into a large and a small subunit and the autocatalytic cleavage is essential to the functional activation of the enzyme.</text>
</comment>
<comment type="similarity">
    <text evidence="5">Belongs to the gamma-glutamyltransferase family.</text>
</comment>
<evidence type="ECO:0000250" key="1">
    <source>
        <dbReference type="UniProtKB" id="P07314"/>
    </source>
</evidence>
<evidence type="ECO:0000250" key="2">
    <source>
        <dbReference type="UniProtKB" id="P19440"/>
    </source>
</evidence>
<evidence type="ECO:0000250" key="3">
    <source>
        <dbReference type="UniProtKB" id="Q6P531"/>
    </source>
</evidence>
<evidence type="ECO:0000255" key="4"/>
<evidence type="ECO:0000305" key="5"/>